<name>YBEY_CLOTE</name>
<evidence type="ECO:0000255" key="1">
    <source>
        <dbReference type="HAMAP-Rule" id="MF_00009"/>
    </source>
</evidence>
<protein>
    <recommendedName>
        <fullName evidence="1">Endoribonuclease YbeY</fullName>
        <ecNumber evidence="1">3.1.-.-</ecNumber>
    </recommendedName>
</protein>
<accession>Q892R9</accession>
<reference key="1">
    <citation type="journal article" date="2003" name="Proc. Natl. Acad. Sci. U.S.A.">
        <title>The genome sequence of Clostridium tetani, the causative agent of tetanus disease.</title>
        <authorList>
            <person name="Brueggemann H."/>
            <person name="Baeumer S."/>
            <person name="Fricke W.F."/>
            <person name="Wiezer A."/>
            <person name="Liesegang H."/>
            <person name="Decker I."/>
            <person name="Herzberg C."/>
            <person name="Martinez-Arias R."/>
            <person name="Merkl R."/>
            <person name="Henne A."/>
            <person name="Gottschalk G."/>
        </authorList>
    </citation>
    <scope>NUCLEOTIDE SEQUENCE [LARGE SCALE GENOMIC DNA]</scope>
    <source>
        <strain>Massachusetts / E88</strain>
    </source>
</reference>
<keyword id="KW-0963">Cytoplasm</keyword>
<keyword id="KW-0255">Endonuclease</keyword>
<keyword id="KW-0378">Hydrolase</keyword>
<keyword id="KW-0479">Metal-binding</keyword>
<keyword id="KW-0540">Nuclease</keyword>
<keyword id="KW-1185">Reference proteome</keyword>
<keyword id="KW-0690">Ribosome biogenesis</keyword>
<keyword id="KW-0698">rRNA processing</keyword>
<keyword id="KW-0862">Zinc</keyword>
<proteinExistence type="inferred from homology"/>
<feature type="chain" id="PRO_0000102442" description="Endoribonuclease YbeY">
    <location>
        <begin position="1"/>
        <end position="167"/>
    </location>
</feature>
<feature type="binding site" evidence="1">
    <location>
        <position position="132"/>
    </location>
    <ligand>
        <name>Zn(2+)</name>
        <dbReference type="ChEBI" id="CHEBI:29105"/>
        <note>catalytic</note>
    </ligand>
</feature>
<feature type="binding site" evidence="1">
    <location>
        <position position="136"/>
    </location>
    <ligand>
        <name>Zn(2+)</name>
        <dbReference type="ChEBI" id="CHEBI:29105"/>
        <note>catalytic</note>
    </ligand>
</feature>
<feature type="binding site" evidence="1">
    <location>
        <position position="142"/>
    </location>
    <ligand>
        <name>Zn(2+)</name>
        <dbReference type="ChEBI" id="CHEBI:29105"/>
        <note>catalytic</note>
    </ligand>
</feature>
<gene>
    <name evidence="1" type="primary">ybeY</name>
    <name type="ordered locus">CTC_02021</name>
</gene>
<organism>
    <name type="scientific">Clostridium tetani (strain Massachusetts / E88)</name>
    <dbReference type="NCBI Taxonomy" id="212717"/>
    <lineage>
        <taxon>Bacteria</taxon>
        <taxon>Bacillati</taxon>
        <taxon>Bacillota</taxon>
        <taxon>Clostridia</taxon>
        <taxon>Eubacteriales</taxon>
        <taxon>Clostridiaceae</taxon>
        <taxon>Clostridium</taxon>
    </lineage>
</organism>
<dbReference type="EC" id="3.1.-.-" evidence="1"/>
<dbReference type="EMBL" id="AE015927">
    <property type="protein sequence ID" value="AAO36525.1"/>
    <property type="molecule type" value="Genomic_DNA"/>
</dbReference>
<dbReference type="RefSeq" id="WP_011100183.1">
    <property type="nucleotide sequence ID" value="NC_004557.1"/>
</dbReference>
<dbReference type="SMR" id="Q892R9"/>
<dbReference type="STRING" id="212717.CTC_02021"/>
<dbReference type="GeneID" id="24253317"/>
<dbReference type="KEGG" id="ctc:CTC_02021"/>
<dbReference type="HOGENOM" id="CLU_106710_3_0_9"/>
<dbReference type="OrthoDB" id="9807740at2"/>
<dbReference type="Proteomes" id="UP000001412">
    <property type="component" value="Chromosome"/>
</dbReference>
<dbReference type="GO" id="GO:0005737">
    <property type="term" value="C:cytoplasm"/>
    <property type="evidence" value="ECO:0007669"/>
    <property type="project" value="UniProtKB-SubCell"/>
</dbReference>
<dbReference type="GO" id="GO:0004222">
    <property type="term" value="F:metalloendopeptidase activity"/>
    <property type="evidence" value="ECO:0007669"/>
    <property type="project" value="InterPro"/>
</dbReference>
<dbReference type="GO" id="GO:0004521">
    <property type="term" value="F:RNA endonuclease activity"/>
    <property type="evidence" value="ECO:0007669"/>
    <property type="project" value="UniProtKB-UniRule"/>
</dbReference>
<dbReference type="GO" id="GO:0008270">
    <property type="term" value="F:zinc ion binding"/>
    <property type="evidence" value="ECO:0007669"/>
    <property type="project" value="UniProtKB-UniRule"/>
</dbReference>
<dbReference type="GO" id="GO:0006364">
    <property type="term" value="P:rRNA processing"/>
    <property type="evidence" value="ECO:0007669"/>
    <property type="project" value="UniProtKB-UniRule"/>
</dbReference>
<dbReference type="Gene3D" id="3.40.390.30">
    <property type="entry name" value="Metalloproteases ('zincins'), catalytic domain"/>
    <property type="match status" value="1"/>
</dbReference>
<dbReference type="HAMAP" id="MF_00009">
    <property type="entry name" value="Endoribonucl_YbeY"/>
    <property type="match status" value="1"/>
</dbReference>
<dbReference type="InterPro" id="IPR023091">
    <property type="entry name" value="MetalPrtase_cat_dom_sf_prd"/>
</dbReference>
<dbReference type="InterPro" id="IPR002036">
    <property type="entry name" value="YbeY"/>
</dbReference>
<dbReference type="InterPro" id="IPR020549">
    <property type="entry name" value="YbeY_CS"/>
</dbReference>
<dbReference type="NCBIfam" id="TIGR00043">
    <property type="entry name" value="rRNA maturation RNase YbeY"/>
    <property type="match status" value="1"/>
</dbReference>
<dbReference type="PANTHER" id="PTHR46986">
    <property type="entry name" value="ENDORIBONUCLEASE YBEY, CHLOROPLASTIC"/>
    <property type="match status" value="1"/>
</dbReference>
<dbReference type="PANTHER" id="PTHR46986:SF1">
    <property type="entry name" value="ENDORIBONUCLEASE YBEY, CHLOROPLASTIC"/>
    <property type="match status" value="1"/>
</dbReference>
<dbReference type="Pfam" id="PF02130">
    <property type="entry name" value="YbeY"/>
    <property type="match status" value="1"/>
</dbReference>
<dbReference type="SUPFAM" id="SSF55486">
    <property type="entry name" value="Metalloproteases ('zincins'), catalytic domain"/>
    <property type="match status" value="1"/>
</dbReference>
<dbReference type="PROSITE" id="PS01306">
    <property type="entry name" value="UPF0054"/>
    <property type="match status" value="1"/>
</dbReference>
<comment type="function">
    <text evidence="1">Single strand-specific metallo-endoribonuclease involved in late-stage 70S ribosome quality control and in maturation of the 3' terminus of the 16S rRNA.</text>
</comment>
<comment type="cofactor">
    <cofactor evidence="1">
        <name>Zn(2+)</name>
        <dbReference type="ChEBI" id="CHEBI:29105"/>
    </cofactor>
    <text evidence="1">Binds 1 zinc ion.</text>
</comment>
<comment type="subcellular location">
    <subcellularLocation>
        <location evidence="1">Cytoplasm</location>
    </subcellularLocation>
</comment>
<comment type="similarity">
    <text evidence="1">Belongs to the endoribonuclease YbeY family.</text>
</comment>
<sequence length="167" mass="19631">MIYIDNRQNKIKAQEDLDKLINEIIDYALKKEEVDIGYEISVIYVDNEIIKEINNDTRGINKETDVLSFPMLEYPKGRVFSESYREYSFGVEYLNEGNLVLGDIVLSLEKALEQSKEYNHSFLREVCYLVVHSVLHLLGYDHIDEEEKVIMRKKEEEILESFNISRG</sequence>